<sequence length="505" mass="58491">MNETAWLDRVFSNTSLGHRLLDRLTLTNLRHAFYLISPYETTVESIDDVPNYNAEVSAWWLVFLTAEFFILFISGHEDRFALNDSITSICAGMLSQCFKFGGRAVAIFLYVIVWDNWRILELPWDSPWTWIFCLFFQDFMYYLGHRAVHEAGFFWGLHTIHHSSEYYNFSTALRQAAIQDAGLAIYDCIQAFFIPPSIFLVHRYFSEIFQFIMHTSLVDTMGPLGLVFNTPSHHRVHHGRNPYCIDKNYGGVFIIWDKMFNTFEAERHDDPPIYGLVTNENTFNQIYLQFHALWDILIFKGFTKDVKGEPMFPGVVNKLKATVFPPGWFPGVPVTPFFHWMSMVNPAHGVPEPEKPVLRYSPPARILVKVYVASSFLLLLAIFFHFEYDRNHLSYLDCTVKIAYFVVTMQCFGAFFDMKWYARYIEIARCCGVLIYYGVLMFDHIGAGTHRLFVISLHIMAIALWTTDVLVEKLSQCCSKNQSINPEKGDLERAPEIASISKNVQ</sequence>
<name>ALKMO_CAEEL</name>
<keyword id="KW-0256">Endoplasmic reticulum</keyword>
<keyword id="KW-0408">Iron</keyword>
<keyword id="KW-0472">Membrane</keyword>
<keyword id="KW-0560">Oxidoreductase</keyword>
<keyword id="KW-1185">Reference proteome</keyword>
<keyword id="KW-0812">Transmembrane</keyword>
<keyword id="KW-1133">Transmembrane helix</keyword>
<protein>
    <recommendedName>
        <fullName evidence="4">Alkylglycerol monooxygenase</fullName>
        <ecNumber evidence="1">1.14.16.5</ecNumber>
    </recommendedName>
    <alternativeName>
        <fullName>Transmembrane protein 195 homolog</fullName>
    </alternativeName>
</protein>
<comment type="function">
    <text evidence="1">Glyceryl-ether monooxygenase that cleaves the O-alkyl bond of ether lipids.</text>
</comment>
<comment type="catalytic activity">
    <reaction evidence="1">
        <text>1-O-(1,2-saturated-alkyl)-sn-glycerol + (6R)-L-erythro-5,6,7,8-tetrahydrobiopterin + O2 = a 1-(1-hydroxyalkyl)-sn-glycerol + (6R)-L-erythro-6,7-dihydrobiopterin + H2O</text>
        <dbReference type="Rhea" id="RHEA:36255"/>
        <dbReference type="ChEBI" id="CHEBI:15377"/>
        <dbReference type="ChEBI" id="CHEBI:15379"/>
        <dbReference type="ChEBI" id="CHEBI:43120"/>
        <dbReference type="ChEBI" id="CHEBI:59560"/>
        <dbReference type="ChEBI" id="CHEBI:73418"/>
        <dbReference type="ChEBI" id="CHEBI:83957"/>
        <dbReference type="EC" id="1.14.16.5"/>
    </reaction>
</comment>
<comment type="cofactor">
    <cofactor evidence="1">
        <name>Fe cation</name>
        <dbReference type="ChEBI" id="CHEBI:24875"/>
    </cofactor>
</comment>
<comment type="subcellular location">
    <subcellularLocation>
        <location evidence="1">Endoplasmic reticulum membrane</location>
        <topology evidence="1">Multi-pass membrane protein</topology>
    </subcellularLocation>
</comment>
<comment type="similarity">
    <text evidence="3">Belongs to the sterol desaturase family. TMEM195 subfamily.</text>
</comment>
<dbReference type="EC" id="1.14.16.5" evidence="1"/>
<dbReference type="EMBL" id="Z93372">
    <property type="protein sequence ID" value="CAB07547.2"/>
    <property type="molecule type" value="Genomic_DNA"/>
</dbReference>
<dbReference type="PIR" id="T18789">
    <property type="entry name" value="T18789"/>
</dbReference>
<dbReference type="RefSeq" id="NP_499664.2">
    <property type="nucleotide sequence ID" value="NM_067263.5"/>
</dbReference>
<dbReference type="FunCoup" id="O17554">
    <property type="interactions" value="71"/>
</dbReference>
<dbReference type="STRING" id="6239.BE10.2.1"/>
<dbReference type="PaxDb" id="6239-BE10.2"/>
<dbReference type="EnsemblMetazoa" id="BE10.2.1">
    <property type="protein sequence ID" value="BE10.2.1"/>
    <property type="gene ID" value="WBGene00007210"/>
</dbReference>
<dbReference type="EnsemblMetazoa" id="BE10.2.2">
    <property type="protein sequence ID" value="BE10.2.2"/>
    <property type="gene ID" value="WBGene00007210"/>
</dbReference>
<dbReference type="GeneID" id="176695"/>
<dbReference type="KEGG" id="cel:CELE_BE10.2"/>
<dbReference type="UCSC" id="BE10.2">
    <property type="organism name" value="c. elegans"/>
</dbReference>
<dbReference type="AGR" id="WB:WBGene00007210"/>
<dbReference type="CTD" id="176695"/>
<dbReference type="WormBase" id="BE10.2">
    <property type="protein sequence ID" value="CE30592"/>
    <property type="gene ID" value="WBGene00007210"/>
    <property type="gene designation" value="agmo-1"/>
</dbReference>
<dbReference type="eggNOG" id="KOG0872">
    <property type="taxonomic scope" value="Eukaryota"/>
</dbReference>
<dbReference type="GeneTree" id="ENSGT00440000033807"/>
<dbReference type="HOGENOM" id="CLU_033631_2_1_1"/>
<dbReference type="InParanoid" id="O17554"/>
<dbReference type="OMA" id="HIGAGTH"/>
<dbReference type="OrthoDB" id="6354873at2759"/>
<dbReference type="PhylomeDB" id="O17554"/>
<dbReference type="Reactome" id="R-CEL-75109">
    <property type="pathway name" value="Triglyceride biosynthesis"/>
</dbReference>
<dbReference type="PRO" id="PR:O17554"/>
<dbReference type="Proteomes" id="UP000001940">
    <property type="component" value="Chromosome III"/>
</dbReference>
<dbReference type="Bgee" id="WBGene00007210">
    <property type="expression patterns" value="Expressed in pharyngeal muscle cell (C elegans) and 3 other cell types or tissues"/>
</dbReference>
<dbReference type="GO" id="GO:0005783">
    <property type="term" value="C:endoplasmic reticulum"/>
    <property type="evidence" value="ECO:0000318"/>
    <property type="project" value="GO_Central"/>
</dbReference>
<dbReference type="GO" id="GO:0005789">
    <property type="term" value="C:endoplasmic reticulum membrane"/>
    <property type="evidence" value="ECO:0007669"/>
    <property type="project" value="UniProtKB-SubCell"/>
</dbReference>
<dbReference type="GO" id="GO:0050479">
    <property type="term" value="F:glyceryl-ether monooxygenase activity"/>
    <property type="evidence" value="ECO:0000318"/>
    <property type="project" value="GO_Central"/>
</dbReference>
<dbReference type="GO" id="GO:0005506">
    <property type="term" value="F:iron ion binding"/>
    <property type="evidence" value="ECO:0007669"/>
    <property type="project" value="InterPro"/>
</dbReference>
<dbReference type="GO" id="GO:0008610">
    <property type="term" value="P:lipid biosynthetic process"/>
    <property type="evidence" value="ECO:0007669"/>
    <property type="project" value="InterPro"/>
</dbReference>
<dbReference type="GO" id="GO:0006643">
    <property type="term" value="P:membrane lipid metabolic process"/>
    <property type="evidence" value="ECO:0000318"/>
    <property type="project" value="GO_Central"/>
</dbReference>
<dbReference type="InterPro" id="IPR056853">
    <property type="entry name" value="AGMP_C"/>
</dbReference>
<dbReference type="InterPro" id="IPR006694">
    <property type="entry name" value="Fatty_acid_hydroxylase"/>
</dbReference>
<dbReference type="InterPro" id="IPR051689">
    <property type="entry name" value="Sterol_desaturase/TMEM195"/>
</dbReference>
<dbReference type="PANTHER" id="PTHR21624:SF4">
    <property type="entry name" value="ALKYLGLYCEROL MONOOXYGENASE"/>
    <property type="match status" value="1"/>
</dbReference>
<dbReference type="PANTHER" id="PTHR21624">
    <property type="entry name" value="STEROL DESATURASE-RELATED PROTEIN"/>
    <property type="match status" value="1"/>
</dbReference>
<dbReference type="Pfam" id="PF24858">
    <property type="entry name" value="AGMP_C"/>
    <property type="match status" value="1"/>
</dbReference>
<dbReference type="Pfam" id="PF04116">
    <property type="entry name" value="FA_hydroxylase"/>
    <property type="match status" value="1"/>
</dbReference>
<accession>O17554</accession>
<reference key="1">
    <citation type="journal article" date="1998" name="Science">
        <title>Genome sequence of the nematode C. elegans: a platform for investigating biology.</title>
        <authorList>
            <consortium name="The C. elegans sequencing consortium"/>
        </authorList>
    </citation>
    <scope>NUCLEOTIDE SEQUENCE [LARGE SCALE GENOMIC DNA]</scope>
    <source>
        <strain>Bristol N2</strain>
    </source>
</reference>
<proteinExistence type="inferred from homology"/>
<organism>
    <name type="scientific">Caenorhabditis elegans</name>
    <dbReference type="NCBI Taxonomy" id="6239"/>
    <lineage>
        <taxon>Eukaryota</taxon>
        <taxon>Metazoa</taxon>
        <taxon>Ecdysozoa</taxon>
        <taxon>Nematoda</taxon>
        <taxon>Chromadorea</taxon>
        <taxon>Rhabditida</taxon>
        <taxon>Rhabditina</taxon>
        <taxon>Rhabditomorpha</taxon>
        <taxon>Rhabditoidea</taxon>
        <taxon>Rhabditidae</taxon>
        <taxon>Peloderinae</taxon>
        <taxon>Caenorhabditis</taxon>
    </lineage>
</organism>
<feature type="chain" id="PRO_0000299305" description="Alkylglycerol monooxygenase">
    <location>
        <begin position="1"/>
        <end position="505"/>
    </location>
</feature>
<feature type="transmembrane region" description="Helical" evidence="2">
    <location>
        <begin position="56"/>
        <end position="76"/>
    </location>
</feature>
<feature type="transmembrane region" description="Helical" evidence="2">
    <location>
        <begin position="104"/>
        <end position="124"/>
    </location>
</feature>
<feature type="transmembrane region" description="Helical" evidence="2">
    <location>
        <begin position="366"/>
        <end position="386"/>
    </location>
</feature>
<feature type="transmembrane region" description="Helical" evidence="2">
    <location>
        <begin position="396"/>
        <end position="416"/>
    </location>
</feature>
<feature type="transmembrane region" description="Helical" evidence="2">
    <location>
        <begin position="430"/>
        <end position="450"/>
    </location>
</feature>
<feature type="transmembrane region" description="Helical" evidence="2">
    <location>
        <begin position="452"/>
        <end position="472"/>
    </location>
</feature>
<feature type="domain" description="Fatty acid hydroxylase" evidence="2">
    <location>
        <begin position="130"/>
        <end position="262"/>
    </location>
</feature>
<feature type="short sequence motif" description="Histidine box-1">
    <location>
        <begin position="145"/>
        <end position="149"/>
    </location>
</feature>
<feature type="short sequence motif" description="Histidine box-2">
    <location>
        <begin position="158"/>
        <end position="162"/>
    </location>
</feature>
<feature type="short sequence motif" description="Histidine box-3">
    <location>
        <begin position="234"/>
        <end position="238"/>
    </location>
</feature>
<evidence type="ECO:0000250" key="1">
    <source>
        <dbReference type="UniProtKB" id="Q6ZNB7"/>
    </source>
</evidence>
<evidence type="ECO:0000255" key="2"/>
<evidence type="ECO:0000305" key="3"/>
<evidence type="ECO:0000312" key="4">
    <source>
        <dbReference type="WormBase" id="BE10.2"/>
    </source>
</evidence>
<gene>
    <name evidence="4" type="primary">agmo-1</name>
    <name evidence="4" type="ORF">BE10.2</name>
</gene>